<gene>
    <name type="primary">MT-CYB</name>
    <name type="synonym">COB</name>
    <name type="synonym">CYTB</name>
    <name type="synonym">MTCYB</name>
</gene>
<dbReference type="EMBL" id="AY380752">
    <property type="protein sequence ID" value="AAR91765.1"/>
    <property type="molecule type" value="Genomic_DNA"/>
</dbReference>
<dbReference type="SMR" id="Q597E4"/>
<dbReference type="GO" id="GO:0005743">
    <property type="term" value="C:mitochondrial inner membrane"/>
    <property type="evidence" value="ECO:0007669"/>
    <property type="project" value="UniProtKB-SubCell"/>
</dbReference>
<dbReference type="GO" id="GO:0045275">
    <property type="term" value="C:respiratory chain complex III"/>
    <property type="evidence" value="ECO:0007669"/>
    <property type="project" value="InterPro"/>
</dbReference>
<dbReference type="GO" id="GO:0046872">
    <property type="term" value="F:metal ion binding"/>
    <property type="evidence" value="ECO:0007669"/>
    <property type="project" value="UniProtKB-KW"/>
</dbReference>
<dbReference type="GO" id="GO:0008121">
    <property type="term" value="F:ubiquinol-cytochrome-c reductase activity"/>
    <property type="evidence" value="ECO:0007669"/>
    <property type="project" value="InterPro"/>
</dbReference>
<dbReference type="GO" id="GO:0006122">
    <property type="term" value="P:mitochondrial electron transport, ubiquinol to cytochrome c"/>
    <property type="evidence" value="ECO:0007669"/>
    <property type="project" value="TreeGrafter"/>
</dbReference>
<dbReference type="CDD" id="cd00290">
    <property type="entry name" value="cytochrome_b_C"/>
    <property type="match status" value="1"/>
</dbReference>
<dbReference type="CDD" id="cd00284">
    <property type="entry name" value="Cytochrome_b_N"/>
    <property type="match status" value="1"/>
</dbReference>
<dbReference type="FunFam" id="1.20.810.10:FF:000002">
    <property type="entry name" value="Cytochrome b"/>
    <property type="match status" value="1"/>
</dbReference>
<dbReference type="Gene3D" id="1.20.810.10">
    <property type="entry name" value="Cytochrome Bc1 Complex, Chain C"/>
    <property type="match status" value="1"/>
</dbReference>
<dbReference type="InterPro" id="IPR005798">
    <property type="entry name" value="Cyt_b/b6_C"/>
</dbReference>
<dbReference type="InterPro" id="IPR036150">
    <property type="entry name" value="Cyt_b/b6_C_sf"/>
</dbReference>
<dbReference type="InterPro" id="IPR005797">
    <property type="entry name" value="Cyt_b/b6_N"/>
</dbReference>
<dbReference type="InterPro" id="IPR027387">
    <property type="entry name" value="Cytb/b6-like_sf"/>
</dbReference>
<dbReference type="InterPro" id="IPR030689">
    <property type="entry name" value="Cytochrome_b"/>
</dbReference>
<dbReference type="InterPro" id="IPR048260">
    <property type="entry name" value="Cytochrome_b_C_euk/bac"/>
</dbReference>
<dbReference type="InterPro" id="IPR048259">
    <property type="entry name" value="Cytochrome_b_N_euk/bac"/>
</dbReference>
<dbReference type="InterPro" id="IPR016174">
    <property type="entry name" value="Di-haem_cyt_TM"/>
</dbReference>
<dbReference type="PANTHER" id="PTHR19271">
    <property type="entry name" value="CYTOCHROME B"/>
    <property type="match status" value="1"/>
</dbReference>
<dbReference type="PANTHER" id="PTHR19271:SF16">
    <property type="entry name" value="CYTOCHROME B"/>
    <property type="match status" value="1"/>
</dbReference>
<dbReference type="Pfam" id="PF00032">
    <property type="entry name" value="Cytochrom_B_C"/>
    <property type="match status" value="1"/>
</dbReference>
<dbReference type="Pfam" id="PF00033">
    <property type="entry name" value="Cytochrome_B"/>
    <property type="match status" value="1"/>
</dbReference>
<dbReference type="PIRSF" id="PIRSF038885">
    <property type="entry name" value="COB"/>
    <property type="match status" value="1"/>
</dbReference>
<dbReference type="SUPFAM" id="SSF81648">
    <property type="entry name" value="a domain/subunit of cytochrome bc1 complex (Ubiquinol-cytochrome c reductase)"/>
    <property type="match status" value="1"/>
</dbReference>
<dbReference type="SUPFAM" id="SSF81342">
    <property type="entry name" value="Transmembrane di-heme cytochromes"/>
    <property type="match status" value="1"/>
</dbReference>
<dbReference type="PROSITE" id="PS51003">
    <property type="entry name" value="CYTB_CTER"/>
    <property type="match status" value="1"/>
</dbReference>
<dbReference type="PROSITE" id="PS51002">
    <property type="entry name" value="CYTB_NTER"/>
    <property type="match status" value="1"/>
</dbReference>
<feature type="chain" id="PRO_0000254820" description="Cytochrome b">
    <location>
        <begin position="1"/>
        <end position="379"/>
    </location>
</feature>
<feature type="transmembrane region" description="Helical" evidence="2">
    <location>
        <begin position="33"/>
        <end position="53"/>
    </location>
</feature>
<feature type="transmembrane region" description="Helical" evidence="2">
    <location>
        <begin position="77"/>
        <end position="98"/>
    </location>
</feature>
<feature type="transmembrane region" description="Helical" evidence="2">
    <location>
        <begin position="113"/>
        <end position="133"/>
    </location>
</feature>
<feature type="transmembrane region" description="Helical" evidence="2">
    <location>
        <begin position="178"/>
        <end position="198"/>
    </location>
</feature>
<feature type="transmembrane region" description="Helical" evidence="2">
    <location>
        <begin position="226"/>
        <end position="246"/>
    </location>
</feature>
<feature type="transmembrane region" description="Helical" evidence="2">
    <location>
        <begin position="288"/>
        <end position="308"/>
    </location>
</feature>
<feature type="transmembrane region" description="Helical" evidence="2">
    <location>
        <begin position="320"/>
        <end position="340"/>
    </location>
</feature>
<feature type="transmembrane region" description="Helical" evidence="2">
    <location>
        <begin position="347"/>
        <end position="367"/>
    </location>
</feature>
<feature type="binding site" description="axial binding residue" evidence="2">
    <location>
        <position position="83"/>
    </location>
    <ligand>
        <name>heme b</name>
        <dbReference type="ChEBI" id="CHEBI:60344"/>
        <label>b562</label>
    </ligand>
    <ligandPart>
        <name>Fe</name>
        <dbReference type="ChEBI" id="CHEBI:18248"/>
    </ligandPart>
</feature>
<feature type="binding site" description="axial binding residue" evidence="2">
    <location>
        <position position="97"/>
    </location>
    <ligand>
        <name>heme b</name>
        <dbReference type="ChEBI" id="CHEBI:60344"/>
        <label>b566</label>
    </ligand>
    <ligandPart>
        <name>Fe</name>
        <dbReference type="ChEBI" id="CHEBI:18248"/>
    </ligandPart>
</feature>
<feature type="binding site" description="axial binding residue" evidence="2">
    <location>
        <position position="182"/>
    </location>
    <ligand>
        <name>heme b</name>
        <dbReference type="ChEBI" id="CHEBI:60344"/>
        <label>b562</label>
    </ligand>
    <ligandPart>
        <name>Fe</name>
        <dbReference type="ChEBI" id="CHEBI:18248"/>
    </ligandPart>
</feature>
<feature type="binding site" description="axial binding residue" evidence="2">
    <location>
        <position position="196"/>
    </location>
    <ligand>
        <name>heme b</name>
        <dbReference type="ChEBI" id="CHEBI:60344"/>
        <label>b566</label>
    </ligand>
    <ligandPart>
        <name>Fe</name>
        <dbReference type="ChEBI" id="CHEBI:18248"/>
    </ligandPart>
</feature>
<feature type="binding site" evidence="2">
    <location>
        <position position="201"/>
    </location>
    <ligand>
        <name>a ubiquinone</name>
        <dbReference type="ChEBI" id="CHEBI:16389"/>
    </ligand>
</feature>
<evidence type="ECO:0000250" key="1"/>
<evidence type="ECO:0000250" key="2">
    <source>
        <dbReference type="UniProtKB" id="P00157"/>
    </source>
</evidence>
<evidence type="ECO:0000255" key="3">
    <source>
        <dbReference type="PROSITE-ProRule" id="PRU00967"/>
    </source>
</evidence>
<evidence type="ECO:0000255" key="4">
    <source>
        <dbReference type="PROSITE-ProRule" id="PRU00968"/>
    </source>
</evidence>
<keyword id="KW-0249">Electron transport</keyword>
<keyword id="KW-0349">Heme</keyword>
<keyword id="KW-0408">Iron</keyword>
<keyword id="KW-0472">Membrane</keyword>
<keyword id="KW-0479">Metal-binding</keyword>
<keyword id="KW-0496">Mitochondrion</keyword>
<keyword id="KW-0999">Mitochondrion inner membrane</keyword>
<keyword id="KW-0679">Respiratory chain</keyword>
<keyword id="KW-0812">Transmembrane</keyword>
<keyword id="KW-1133">Transmembrane helix</keyword>
<keyword id="KW-0813">Transport</keyword>
<keyword id="KW-0830">Ubiquinone</keyword>
<organism>
    <name type="scientific">Micronycteris minuta</name>
    <name type="common">White-bellied big-eared bat</name>
    <dbReference type="NCBI Taxonomy" id="148067"/>
    <lineage>
        <taxon>Eukaryota</taxon>
        <taxon>Metazoa</taxon>
        <taxon>Chordata</taxon>
        <taxon>Craniata</taxon>
        <taxon>Vertebrata</taxon>
        <taxon>Euteleostomi</taxon>
        <taxon>Mammalia</taxon>
        <taxon>Eutheria</taxon>
        <taxon>Laurasiatheria</taxon>
        <taxon>Chiroptera</taxon>
        <taxon>Yangochiroptera</taxon>
        <taxon>Phyllostomidae</taxon>
        <taxon>Phyllostominae</taxon>
        <taxon>Micronycteris</taxon>
    </lineage>
</organism>
<proteinExistence type="inferred from homology"/>
<accession>Q597E4</accession>
<reference key="1">
    <citation type="submission" date="2003-09" db="EMBL/GenBank/DDBJ databases">
        <title>Molecular evidence for unrecognized biodiversity in the bat genus Micronycteris (Phyllostomidae), with descriptions of two new subgenera.</title>
        <authorList>
            <person name="Porter C.A."/>
            <person name="Hoofer S.R."/>
            <person name="Cline C.A."/>
            <person name="Hoffmann F.G."/>
            <person name="Baker R.J."/>
        </authorList>
    </citation>
    <scope>NUCLEOTIDE SEQUENCE [GENOMIC DNA]</scope>
</reference>
<name>CYB_MICMT</name>
<geneLocation type="mitochondrion"/>
<sequence length="379" mass="42653">MTNIRKTHPLLKILNNSLVDLPAPSSLTSWWNFGSLLGICLAVQILTGLFLAMHYTSDTATAFNSVTHICRDVNYGWILRYLHANGASMFFICLYLHVGRGLYYGSYTYTETWNIGIILLFAVMATAFMGYVLPWGQMSFWGATVITNLLSAIPYIGTDLVQWIWGGFSVDKATLTRFFAFHFLLPFIISALVMVHLLFLHETGSNNPTGIPSDLDMIPFHPYYTIKDILGLLIMLTALSTLVLFSPDLLGDPDNYTPANPLNTPPHIKPEWYFLFAYAILRSIPNKLGGVLALVLSILVLAIVPMLHTSKQQSMMFRPLSQCLFWLLVADLFTLTWIGGQPVEYPYIIIGQVASILYFSIILILMPLIGIMENHLLKW</sequence>
<comment type="function">
    <text evidence="2">Component of the ubiquinol-cytochrome c reductase complex (complex III or cytochrome b-c1 complex) that is part of the mitochondrial respiratory chain. The b-c1 complex mediates electron transfer from ubiquinol to cytochrome c. Contributes to the generation of a proton gradient across the mitochondrial membrane that is then used for ATP synthesis.</text>
</comment>
<comment type="cofactor">
    <cofactor evidence="2">
        <name>heme b</name>
        <dbReference type="ChEBI" id="CHEBI:60344"/>
    </cofactor>
    <text evidence="2">Binds 2 heme b groups non-covalently.</text>
</comment>
<comment type="subunit">
    <text evidence="2">The cytochrome bc1 complex contains 11 subunits: 3 respiratory subunits (MT-CYB, CYC1 and UQCRFS1), 2 core proteins (UQCRC1 and UQCRC2) and 6 low-molecular weight proteins (UQCRH/QCR6, UQCRB/QCR7, UQCRQ/QCR8, UQCR10/QCR9, UQCR11/QCR10 and a cleavage product of UQCRFS1). This cytochrome bc1 complex then forms a dimer.</text>
</comment>
<comment type="subcellular location">
    <subcellularLocation>
        <location evidence="2">Mitochondrion inner membrane</location>
        <topology evidence="2">Multi-pass membrane protein</topology>
    </subcellularLocation>
</comment>
<comment type="miscellaneous">
    <text evidence="1">Heme 1 (or BL or b562) is low-potential and absorbs at about 562 nm, and heme 2 (or BH or b566) is high-potential and absorbs at about 566 nm.</text>
</comment>
<comment type="similarity">
    <text evidence="3 4">Belongs to the cytochrome b family.</text>
</comment>
<comment type="caution">
    <text evidence="2">The full-length protein contains only eight transmembrane helices, not nine as predicted by bioinformatics tools.</text>
</comment>
<protein>
    <recommendedName>
        <fullName>Cytochrome b</fullName>
    </recommendedName>
    <alternativeName>
        <fullName>Complex III subunit 3</fullName>
    </alternativeName>
    <alternativeName>
        <fullName>Complex III subunit III</fullName>
    </alternativeName>
    <alternativeName>
        <fullName>Cytochrome b-c1 complex subunit 3</fullName>
    </alternativeName>
    <alternativeName>
        <fullName>Ubiquinol-cytochrome-c reductase complex cytochrome b subunit</fullName>
    </alternativeName>
</protein>